<feature type="chain" id="PRO_0000184289" description="Ribosomal RNA small subunit methyltransferase G">
    <location>
        <begin position="1"/>
        <end position="191"/>
    </location>
</feature>
<feature type="binding site" evidence="1">
    <location>
        <position position="59"/>
    </location>
    <ligand>
        <name>S-adenosyl-L-methionine</name>
        <dbReference type="ChEBI" id="CHEBI:59789"/>
    </ligand>
</feature>
<feature type="binding site" evidence="1">
    <location>
        <begin position="111"/>
        <end position="112"/>
    </location>
    <ligand>
        <name>S-adenosyl-L-methionine</name>
        <dbReference type="ChEBI" id="CHEBI:59789"/>
    </ligand>
</feature>
<feature type="binding site" evidence="1">
    <location>
        <position position="124"/>
    </location>
    <ligand>
        <name>S-adenosyl-L-methionine</name>
        <dbReference type="ChEBI" id="CHEBI:59789"/>
    </ligand>
</feature>
<keyword id="KW-0963">Cytoplasm</keyword>
<keyword id="KW-0489">Methyltransferase</keyword>
<keyword id="KW-1185">Reference proteome</keyword>
<keyword id="KW-0698">rRNA processing</keyword>
<keyword id="KW-0949">S-adenosyl-L-methionine</keyword>
<keyword id="KW-0808">Transferase</keyword>
<evidence type="ECO:0000255" key="1">
    <source>
        <dbReference type="HAMAP-Rule" id="MF_00074"/>
    </source>
</evidence>
<gene>
    <name evidence="1" type="primary">rsmG</name>
    <name type="ordered locus">MPN_558</name>
    <name type="ORF">MP284</name>
</gene>
<sequence length="191" mass="22080">MNNSKLKQYVQLVQTANQNFNLTGLKTEGEIYEHLVQEIIELFNEYDSYFDHKKVADLGSGNGCPGVILKLLFPQIKTLDLIDSKHKKVNFLKEVIQTLELNNTQALCARIENHTEQYDTLCSRGLGSIIEVNAFALKLLKPNGIIFHIKQSLDQYLEFEDSEQKDQFKPLFFKFFHGKRQQILIAMKKNV</sequence>
<protein>
    <recommendedName>
        <fullName evidence="1">Ribosomal RNA small subunit methyltransferase G</fullName>
        <ecNumber evidence="1">2.1.1.-</ecNumber>
    </recommendedName>
    <alternativeName>
        <fullName evidence="1">16S rRNA 7-methylguanosine methyltransferase</fullName>
        <shortName evidence="1">16S rRNA m7G methyltransferase</shortName>
    </alternativeName>
</protein>
<dbReference type="EC" id="2.1.1.-" evidence="1"/>
<dbReference type="EMBL" id="U00089">
    <property type="protein sequence ID" value="AAB95932.1"/>
    <property type="molecule type" value="Genomic_DNA"/>
</dbReference>
<dbReference type="PIR" id="S73610">
    <property type="entry name" value="S73610"/>
</dbReference>
<dbReference type="RefSeq" id="NP_110247.1">
    <property type="nucleotide sequence ID" value="NC_000912.1"/>
</dbReference>
<dbReference type="RefSeq" id="WP_010874915.1">
    <property type="nucleotide sequence ID" value="NZ_OU342337.1"/>
</dbReference>
<dbReference type="SMR" id="P75220"/>
<dbReference type="IntAct" id="P75220">
    <property type="interactions" value="1"/>
</dbReference>
<dbReference type="STRING" id="272634.MPN_558"/>
<dbReference type="EnsemblBacteria" id="AAB95932">
    <property type="protein sequence ID" value="AAB95932"/>
    <property type="gene ID" value="MPN_558"/>
</dbReference>
<dbReference type="GeneID" id="66608760"/>
<dbReference type="KEGG" id="mpn:MPN_558"/>
<dbReference type="PATRIC" id="fig|272634.6.peg.620"/>
<dbReference type="HOGENOM" id="CLU_065341_0_1_14"/>
<dbReference type="OrthoDB" id="9808773at2"/>
<dbReference type="BioCyc" id="MPNE272634:G1GJ3-916-MONOMER"/>
<dbReference type="Proteomes" id="UP000000808">
    <property type="component" value="Chromosome"/>
</dbReference>
<dbReference type="GO" id="GO:0005829">
    <property type="term" value="C:cytosol"/>
    <property type="evidence" value="ECO:0007669"/>
    <property type="project" value="TreeGrafter"/>
</dbReference>
<dbReference type="GO" id="GO:0070043">
    <property type="term" value="F:rRNA (guanine-N7-)-methyltransferase activity"/>
    <property type="evidence" value="ECO:0007669"/>
    <property type="project" value="UniProtKB-UniRule"/>
</dbReference>
<dbReference type="Gene3D" id="3.40.50.150">
    <property type="entry name" value="Vaccinia Virus protein VP39"/>
    <property type="match status" value="1"/>
</dbReference>
<dbReference type="HAMAP" id="MF_00074">
    <property type="entry name" value="16SrRNA_methyltr_G"/>
    <property type="match status" value="1"/>
</dbReference>
<dbReference type="InterPro" id="IPR003682">
    <property type="entry name" value="rRNA_ssu_MeTfrase_G"/>
</dbReference>
<dbReference type="InterPro" id="IPR029063">
    <property type="entry name" value="SAM-dependent_MTases_sf"/>
</dbReference>
<dbReference type="NCBIfam" id="TIGR00138">
    <property type="entry name" value="rsmG_gidB"/>
    <property type="match status" value="1"/>
</dbReference>
<dbReference type="PANTHER" id="PTHR31760">
    <property type="entry name" value="S-ADENOSYL-L-METHIONINE-DEPENDENT METHYLTRANSFERASES SUPERFAMILY PROTEIN"/>
    <property type="match status" value="1"/>
</dbReference>
<dbReference type="PANTHER" id="PTHR31760:SF0">
    <property type="entry name" value="S-ADENOSYL-L-METHIONINE-DEPENDENT METHYLTRANSFERASES SUPERFAMILY PROTEIN"/>
    <property type="match status" value="1"/>
</dbReference>
<dbReference type="Pfam" id="PF02527">
    <property type="entry name" value="GidB"/>
    <property type="match status" value="1"/>
</dbReference>
<dbReference type="PIRSF" id="PIRSF003078">
    <property type="entry name" value="GidB"/>
    <property type="match status" value="1"/>
</dbReference>
<dbReference type="SUPFAM" id="SSF53335">
    <property type="entry name" value="S-adenosyl-L-methionine-dependent methyltransferases"/>
    <property type="match status" value="1"/>
</dbReference>
<accession>P75220</accession>
<comment type="function">
    <text evidence="1">Specifically methylates the N7 position of a guanine in 16S rRNA.</text>
</comment>
<comment type="subcellular location">
    <subcellularLocation>
        <location evidence="1">Cytoplasm</location>
    </subcellularLocation>
</comment>
<comment type="similarity">
    <text evidence="1">Belongs to the methyltransferase superfamily. RNA methyltransferase RsmG family.</text>
</comment>
<name>RSMG_MYCPN</name>
<reference key="1">
    <citation type="journal article" date="1996" name="Nucleic Acids Res.">
        <title>Complete sequence analysis of the genome of the bacterium Mycoplasma pneumoniae.</title>
        <authorList>
            <person name="Himmelreich R."/>
            <person name="Hilbert H."/>
            <person name="Plagens H."/>
            <person name="Pirkl E."/>
            <person name="Li B.-C."/>
            <person name="Herrmann R."/>
        </authorList>
    </citation>
    <scope>NUCLEOTIDE SEQUENCE [LARGE SCALE GENOMIC DNA]</scope>
    <source>
        <strain>ATCC 29342 / M129 / Subtype 1</strain>
    </source>
</reference>
<organism>
    <name type="scientific">Mycoplasma pneumoniae (strain ATCC 29342 / M129 / Subtype 1)</name>
    <name type="common">Mycoplasmoides pneumoniae</name>
    <dbReference type="NCBI Taxonomy" id="272634"/>
    <lineage>
        <taxon>Bacteria</taxon>
        <taxon>Bacillati</taxon>
        <taxon>Mycoplasmatota</taxon>
        <taxon>Mycoplasmoidales</taxon>
        <taxon>Mycoplasmoidaceae</taxon>
        <taxon>Mycoplasmoides</taxon>
    </lineage>
</organism>
<proteinExistence type="inferred from homology"/>